<evidence type="ECO:0000255" key="1">
    <source>
        <dbReference type="HAMAP-Rule" id="MF_00459"/>
    </source>
</evidence>
<accession>B2K4K2</accession>
<organism>
    <name type="scientific">Yersinia pseudotuberculosis serotype IB (strain PB1/+)</name>
    <dbReference type="NCBI Taxonomy" id="502801"/>
    <lineage>
        <taxon>Bacteria</taxon>
        <taxon>Pseudomonadati</taxon>
        <taxon>Pseudomonadota</taxon>
        <taxon>Gammaproteobacteria</taxon>
        <taxon>Enterobacterales</taxon>
        <taxon>Yersiniaceae</taxon>
        <taxon>Yersinia</taxon>
    </lineage>
</organism>
<comment type="function">
    <text evidence="1">Part of a membrane-bound complex that couples electron transfer with translocation of ions across the membrane.</text>
</comment>
<comment type="subunit">
    <text evidence="1">The complex is composed of six subunits: RnfA, RnfB, RnfC, RnfD, RnfE and RnfG.</text>
</comment>
<comment type="subcellular location">
    <subcellularLocation>
        <location evidence="1">Cell inner membrane</location>
        <topology evidence="1">Multi-pass membrane protein</topology>
    </subcellularLocation>
</comment>
<comment type="similarity">
    <text evidence="1">Belongs to the NqrDE/RnfAE family.</text>
</comment>
<feature type="chain" id="PRO_1000191745" description="Ion-translocating oxidoreductase complex subunit A">
    <location>
        <begin position="1"/>
        <end position="193"/>
    </location>
</feature>
<feature type="transmembrane region" description="Helical" evidence="1">
    <location>
        <begin position="5"/>
        <end position="25"/>
    </location>
</feature>
<feature type="transmembrane region" description="Helical" evidence="1">
    <location>
        <begin position="39"/>
        <end position="59"/>
    </location>
</feature>
<feature type="transmembrane region" description="Helical" evidence="1">
    <location>
        <begin position="62"/>
        <end position="82"/>
    </location>
</feature>
<feature type="transmembrane region" description="Helical" evidence="1">
    <location>
        <begin position="102"/>
        <end position="122"/>
    </location>
</feature>
<feature type="transmembrane region" description="Helical" evidence="1">
    <location>
        <begin position="134"/>
        <end position="154"/>
    </location>
</feature>
<feature type="transmembrane region" description="Helical" evidence="1">
    <location>
        <begin position="171"/>
        <end position="191"/>
    </location>
</feature>
<name>RNFA_YERPB</name>
<dbReference type="EC" id="7.-.-.-" evidence="1"/>
<dbReference type="EMBL" id="CP001048">
    <property type="protein sequence ID" value="ACC89198.1"/>
    <property type="molecule type" value="Genomic_DNA"/>
</dbReference>
<dbReference type="SMR" id="B2K4K2"/>
<dbReference type="KEGG" id="ypb:YPTS_2237"/>
<dbReference type="PATRIC" id="fig|502801.10.peg.1629"/>
<dbReference type="GO" id="GO:0005886">
    <property type="term" value="C:plasma membrane"/>
    <property type="evidence" value="ECO:0007669"/>
    <property type="project" value="UniProtKB-SubCell"/>
</dbReference>
<dbReference type="GO" id="GO:0022900">
    <property type="term" value="P:electron transport chain"/>
    <property type="evidence" value="ECO:0007669"/>
    <property type="project" value="UniProtKB-UniRule"/>
</dbReference>
<dbReference type="HAMAP" id="MF_00459">
    <property type="entry name" value="RsxA_RnfA"/>
    <property type="match status" value="1"/>
</dbReference>
<dbReference type="InterPro" id="IPR011293">
    <property type="entry name" value="Ion_transpt_RnfA/RsxA"/>
</dbReference>
<dbReference type="InterPro" id="IPR003667">
    <property type="entry name" value="NqrDE/RnfAE"/>
</dbReference>
<dbReference type="InterPro" id="IPR050133">
    <property type="entry name" value="NqrDE/RnfAE_oxidrdctase"/>
</dbReference>
<dbReference type="NCBIfam" id="NF003481">
    <property type="entry name" value="PRK05151.1"/>
    <property type="match status" value="1"/>
</dbReference>
<dbReference type="NCBIfam" id="TIGR01943">
    <property type="entry name" value="rnfA"/>
    <property type="match status" value="1"/>
</dbReference>
<dbReference type="PANTHER" id="PTHR30335">
    <property type="entry name" value="INTEGRAL MEMBRANE PROTEIN OF SOXR-REDUCING COMPLEX"/>
    <property type="match status" value="1"/>
</dbReference>
<dbReference type="PANTHER" id="PTHR30335:SF0">
    <property type="entry name" value="ION-TRANSLOCATING OXIDOREDUCTASE COMPLEX SUBUNIT A"/>
    <property type="match status" value="1"/>
</dbReference>
<dbReference type="Pfam" id="PF02508">
    <property type="entry name" value="Rnf-Nqr"/>
    <property type="match status" value="1"/>
</dbReference>
<dbReference type="PIRSF" id="PIRSF006102">
    <property type="entry name" value="NQR_DE"/>
    <property type="match status" value="1"/>
</dbReference>
<proteinExistence type="inferred from homology"/>
<sequence>MTEYLLLFVGTVLVNNFVLVKFLGLCPFMGVSKKLETAIGMGLATTFVLTLASVCAWMVNSFILLPLGLIYLRTLAFILVIAVVVQFTELVVRKTSPTLYRLLGIFLPLITTNCAVLGVALLNVNQSHNFMQSAVYGFSAAAGFSLVMVLFAAIRERLAVADVPAPFRGSSIALITAGLMSLAFMGFTGLVKF</sequence>
<protein>
    <recommendedName>
        <fullName evidence="1">Ion-translocating oxidoreductase complex subunit A</fullName>
        <ecNumber evidence="1">7.-.-.-</ecNumber>
    </recommendedName>
    <alternativeName>
        <fullName evidence="1">Rnf electron transport complex subunit A</fullName>
    </alternativeName>
</protein>
<reference key="1">
    <citation type="submission" date="2008-04" db="EMBL/GenBank/DDBJ databases">
        <title>Complete sequence of Yersinia pseudotuberculosis PB1/+.</title>
        <authorList>
            <person name="Copeland A."/>
            <person name="Lucas S."/>
            <person name="Lapidus A."/>
            <person name="Glavina del Rio T."/>
            <person name="Dalin E."/>
            <person name="Tice H."/>
            <person name="Bruce D."/>
            <person name="Goodwin L."/>
            <person name="Pitluck S."/>
            <person name="Munk A.C."/>
            <person name="Brettin T."/>
            <person name="Detter J.C."/>
            <person name="Han C."/>
            <person name="Tapia R."/>
            <person name="Schmutz J."/>
            <person name="Larimer F."/>
            <person name="Land M."/>
            <person name="Hauser L."/>
            <person name="Challacombe J.F."/>
            <person name="Green L."/>
            <person name="Lindler L.E."/>
            <person name="Nikolich M.P."/>
            <person name="Richardson P."/>
        </authorList>
    </citation>
    <scope>NUCLEOTIDE SEQUENCE [LARGE SCALE GENOMIC DNA]</scope>
    <source>
        <strain>PB1/+</strain>
    </source>
</reference>
<gene>
    <name evidence="1" type="primary">rnfA</name>
    <name type="ordered locus">YPTS_2237</name>
</gene>
<keyword id="KW-0997">Cell inner membrane</keyword>
<keyword id="KW-1003">Cell membrane</keyword>
<keyword id="KW-0249">Electron transport</keyword>
<keyword id="KW-0472">Membrane</keyword>
<keyword id="KW-1278">Translocase</keyword>
<keyword id="KW-0812">Transmembrane</keyword>
<keyword id="KW-1133">Transmembrane helix</keyword>
<keyword id="KW-0813">Transport</keyword>